<gene>
    <name type="primary">HBB</name>
</gene>
<feature type="initiator methionine" description="Removed" evidence="1">
    <location>
        <position position="1"/>
    </location>
</feature>
<feature type="chain" id="PRO_0000231016" description="Hemoglobin subunit beta">
    <location>
        <begin position="2"/>
        <end position="147"/>
    </location>
</feature>
<feature type="domain" description="Globin" evidence="3">
    <location>
        <begin position="3"/>
        <end position="147"/>
    </location>
</feature>
<feature type="binding site" description="distal binding residue">
    <location>
        <position position="64"/>
    </location>
    <ligand>
        <name>heme b</name>
        <dbReference type="ChEBI" id="CHEBI:60344"/>
    </ligand>
    <ligandPart>
        <name>Fe</name>
        <dbReference type="ChEBI" id="CHEBI:18248"/>
    </ligandPart>
</feature>
<feature type="binding site" description="proximal binding residue">
    <location>
        <position position="93"/>
    </location>
    <ligand>
        <name>heme b</name>
        <dbReference type="ChEBI" id="CHEBI:60344"/>
    </ligand>
    <ligandPart>
        <name>Fe</name>
        <dbReference type="ChEBI" id="CHEBI:18248"/>
    </ligandPart>
</feature>
<feature type="modified residue" description="N-acetylvaline" evidence="1">
    <location>
        <position position="2"/>
    </location>
</feature>
<feature type="modified residue" description="Phosphothreonine" evidence="2">
    <location>
        <position position="13"/>
    </location>
</feature>
<feature type="modified residue" description="Phosphoserine" evidence="2">
    <location>
        <position position="45"/>
    </location>
</feature>
<feature type="modified residue" description="N6-acetyllysine" evidence="2">
    <location>
        <position position="60"/>
    </location>
</feature>
<feature type="modified residue" description="N6-acetyllysine" evidence="2">
    <location>
        <position position="83"/>
    </location>
</feature>
<feature type="modified residue" description="S-nitrosocysteine" evidence="2">
    <location>
        <position position="94"/>
    </location>
</feature>
<feature type="modified residue" description="N6-acetyllysine" evidence="2">
    <location>
        <position position="145"/>
    </location>
</feature>
<comment type="function">
    <text>Involved in oxygen transport from the lung to the various peripheral tissues.</text>
</comment>
<comment type="subunit">
    <text>Heterotetramer of two alpha chains and two beta chains.</text>
</comment>
<comment type="tissue specificity">
    <text>Red blood cells.</text>
</comment>
<comment type="similarity">
    <text evidence="3">Belongs to the globin family.</text>
</comment>
<protein>
    <recommendedName>
        <fullName>Hemoglobin subunit beta</fullName>
    </recommendedName>
    <alternativeName>
        <fullName>Beta-globin</fullName>
    </alternativeName>
    <alternativeName>
        <fullName>Hemoglobin beta chain</fullName>
    </alternativeName>
</protein>
<proteinExistence type="evidence at transcript level"/>
<accession>Q2KPA3</accession>
<name>HBB_SCAOR</name>
<reference key="1">
    <citation type="submission" date="2004-12" db="EMBL/GenBank/DDBJ databases">
        <title>Recent evolution of a novel low O2 affinity, DPG-insensitive haemoglobin in a strictly fossorial mole.</title>
        <authorList>
            <person name="Campbell K.L."/>
            <person name="Weber R.E."/>
        </authorList>
    </citation>
    <scope>NUCLEOTIDE SEQUENCE [GENOMIC DNA]</scope>
    <source>
        <strain>Isolate CM-3</strain>
        <tissue>Spleen</tissue>
    </source>
</reference>
<organism>
    <name type="scientific">Scapanus orarius</name>
    <name type="common">Coast mole</name>
    <dbReference type="NCBI Taxonomy" id="182674"/>
    <lineage>
        <taxon>Eukaryota</taxon>
        <taxon>Metazoa</taxon>
        <taxon>Chordata</taxon>
        <taxon>Craniata</taxon>
        <taxon>Vertebrata</taxon>
        <taxon>Euteleostomi</taxon>
        <taxon>Mammalia</taxon>
        <taxon>Eutheria</taxon>
        <taxon>Laurasiatheria</taxon>
        <taxon>Eulipotyphla</taxon>
        <taxon>Talpidae</taxon>
        <taxon>Scapanus</taxon>
    </lineage>
</organism>
<dbReference type="EMBL" id="AY842448">
    <property type="protein sequence ID" value="AAW80624.1"/>
    <property type="molecule type" value="Genomic_DNA"/>
</dbReference>
<dbReference type="SMR" id="Q2KPA3"/>
<dbReference type="GO" id="GO:0072562">
    <property type="term" value="C:blood microparticle"/>
    <property type="evidence" value="ECO:0007669"/>
    <property type="project" value="TreeGrafter"/>
</dbReference>
<dbReference type="GO" id="GO:0031838">
    <property type="term" value="C:haptoglobin-hemoglobin complex"/>
    <property type="evidence" value="ECO:0007669"/>
    <property type="project" value="TreeGrafter"/>
</dbReference>
<dbReference type="GO" id="GO:0005833">
    <property type="term" value="C:hemoglobin complex"/>
    <property type="evidence" value="ECO:0007669"/>
    <property type="project" value="InterPro"/>
</dbReference>
<dbReference type="GO" id="GO:0031720">
    <property type="term" value="F:haptoglobin binding"/>
    <property type="evidence" value="ECO:0007669"/>
    <property type="project" value="TreeGrafter"/>
</dbReference>
<dbReference type="GO" id="GO:0020037">
    <property type="term" value="F:heme binding"/>
    <property type="evidence" value="ECO:0007669"/>
    <property type="project" value="InterPro"/>
</dbReference>
<dbReference type="GO" id="GO:0031721">
    <property type="term" value="F:hemoglobin alpha binding"/>
    <property type="evidence" value="ECO:0007669"/>
    <property type="project" value="TreeGrafter"/>
</dbReference>
<dbReference type="GO" id="GO:0046872">
    <property type="term" value="F:metal ion binding"/>
    <property type="evidence" value="ECO:0007669"/>
    <property type="project" value="UniProtKB-KW"/>
</dbReference>
<dbReference type="GO" id="GO:0043177">
    <property type="term" value="F:organic acid binding"/>
    <property type="evidence" value="ECO:0007669"/>
    <property type="project" value="TreeGrafter"/>
</dbReference>
<dbReference type="GO" id="GO:0019825">
    <property type="term" value="F:oxygen binding"/>
    <property type="evidence" value="ECO:0007669"/>
    <property type="project" value="InterPro"/>
</dbReference>
<dbReference type="GO" id="GO:0005344">
    <property type="term" value="F:oxygen carrier activity"/>
    <property type="evidence" value="ECO:0007669"/>
    <property type="project" value="UniProtKB-KW"/>
</dbReference>
<dbReference type="GO" id="GO:0004601">
    <property type="term" value="F:peroxidase activity"/>
    <property type="evidence" value="ECO:0007669"/>
    <property type="project" value="TreeGrafter"/>
</dbReference>
<dbReference type="GO" id="GO:0042744">
    <property type="term" value="P:hydrogen peroxide catabolic process"/>
    <property type="evidence" value="ECO:0007669"/>
    <property type="project" value="TreeGrafter"/>
</dbReference>
<dbReference type="CDD" id="cd08925">
    <property type="entry name" value="Hb-beta-like"/>
    <property type="match status" value="1"/>
</dbReference>
<dbReference type="FunFam" id="1.10.490.10:FF:000001">
    <property type="entry name" value="Hemoglobin subunit beta"/>
    <property type="match status" value="1"/>
</dbReference>
<dbReference type="Gene3D" id="1.10.490.10">
    <property type="entry name" value="Globins"/>
    <property type="match status" value="1"/>
</dbReference>
<dbReference type="InterPro" id="IPR000971">
    <property type="entry name" value="Globin"/>
</dbReference>
<dbReference type="InterPro" id="IPR009050">
    <property type="entry name" value="Globin-like_sf"/>
</dbReference>
<dbReference type="InterPro" id="IPR012292">
    <property type="entry name" value="Globin/Proto"/>
</dbReference>
<dbReference type="InterPro" id="IPR002337">
    <property type="entry name" value="Hemoglobin_b"/>
</dbReference>
<dbReference type="InterPro" id="IPR050056">
    <property type="entry name" value="Hemoglobin_oxygen_transport"/>
</dbReference>
<dbReference type="PANTHER" id="PTHR11442">
    <property type="entry name" value="HEMOGLOBIN FAMILY MEMBER"/>
    <property type="match status" value="1"/>
</dbReference>
<dbReference type="PANTHER" id="PTHR11442:SF42">
    <property type="entry name" value="HEMOGLOBIN SUBUNIT BETA"/>
    <property type="match status" value="1"/>
</dbReference>
<dbReference type="Pfam" id="PF00042">
    <property type="entry name" value="Globin"/>
    <property type="match status" value="1"/>
</dbReference>
<dbReference type="PRINTS" id="PR00814">
    <property type="entry name" value="BETAHAEM"/>
</dbReference>
<dbReference type="SUPFAM" id="SSF46458">
    <property type="entry name" value="Globin-like"/>
    <property type="match status" value="1"/>
</dbReference>
<dbReference type="PROSITE" id="PS01033">
    <property type="entry name" value="GLOBIN"/>
    <property type="match status" value="1"/>
</dbReference>
<sequence length="147" mass="15956">MVHLSAEEKGLVTGLWGKVNVDDVGAEALGRLLVVYPWTQRFFDSFGDLSSAGAIMGNPKVKAHGKKVANSISDGIKNLDNLKGTYAKLSELHCDKLHVDPENFRLLGNVLVCVMARTLGKEFTPHAQAAFQKMVLGVATALAHKYH</sequence>
<keyword id="KW-0007">Acetylation</keyword>
<keyword id="KW-0349">Heme</keyword>
<keyword id="KW-0408">Iron</keyword>
<keyword id="KW-0479">Metal-binding</keyword>
<keyword id="KW-0561">Oxygen transport</keyword>
<keyword id="KW-0597">Phosphoprotein</keyword>
<keyword id="KW-0702">S-nitrosylation</keyword>
<keyword id="KW-0813">Transport</keyword>
<evidence type="ECO:0000250" key="1">
    <source>
        <dbReference type="UniProtKB" id="P02086"/>
    </source>
</evidence>
<evidence type="ECO:0000250" key="2">
    <source>
        <dbReference type="UniProtKB" id="P68871"/>
    </source>
</evidence>
<evidence type="ECO:0000255" key="3">
    <source>
        <dbReference type="PROSITE-ProRule" id="PRU00238"/>
    </source>
</evidence>